<sequence>MDIRAAEISAILKDQIKNYGAEAKVSDVGSVLSVGDGIARVYGLDEVKAGELVEFPGGIKGMALNLERDNVGCVIFGDDRGIKEGDTVKRLGSIVDTSVGKGLLGRVVDGLGEPIDGKGPLKGVAERRRVDVKAPGIIPRKSVHEPMATGIKAIDAMIPVGRGQRELIIGDRQTGKTAIALDTILNQKAINEGDDESAKLYCIYVAVGQKRSTVAQIVKTLEENGALDYTIIVAATASDPAPMQFLAPFTACAMAEYFRDNGMHALIVYDDLSKQAVAYRQMSLLLRRPPGREAYPGDVFYLHSRLLERAAKLNEANGSGSMTALPIIETQANDVSAYIPTNVISITDGQIFLETDLFYQGIRPAVNVGLSVSRVGSAAQTKAMKQVAGKMKGELAQYREMAAFAQFGSDLDAATQKLLNRGQRLTELLKQPQFSPLSMEEQVCVIYAGTRGYLDKLPTSDVQRYEADLLRHLHGEHAALLASIRTEKKLTDDSESQLKAALAKFTEHFA</sequence>
<feature type="chain" id="PRO_0000302664" description="ATP synthase subunit alpha">
    <location>
        <begin position="1"/>
        <end position="510"/>
    </location>
</feature>
<feature type="binding site" evidence="1">
    <location>
        <begin position="170"/>
        <end position="177"/>
    </location>
    <ligand>
        <name>ATP</name>
        <dbReference type="ChEBI" id="CHEBI:30616"/>
    </ligand>
</feature>
<feature type="site" description="Required for activity" evidence="1">
    <location>
        <position position="371"/>
    </location>
</feature>
<protein>
    <recommendedName>
        <fullName evidence="1">ATP synthase subunit alpha</fullName>
        <ecNumber evidence="1">7.1.2.2</ecNumber>
    </recommendedName>
    <alternativeName>
        <fullName evidence="1">ATP synthase F1 sector subunit alpha</fullName>
    </alternativeName>
    <alternativeName>
        <fullName evidence="1">F-ATPase subunit alpha</fullName>
    </alternativeName>
</protein>
<accession>Q0AKV8</accession>
<name>ATPA_MARMM</name>
<proteinExistence type="inferred from homology"/>
<dbReference type="EC" id="7.1.2.2" evidence="1"/>
<dbReference type="EMBL" id="CP000449">
    <property type="protein sequence ID" value="ABI67085.1"/>
    <property type="molecule type" value="Genomic_DNA"/>
</dbReference>
<dbReference type="RefSeq" id="WP_011644729.1">
    <property type="nucleotide sequence ID" value="NC_008347.1"/>
</dbReference>
<dbReference type="SMR" id="Q0AKV8"/>
<dbReference type="STRING" id="394221.Mmar10_2804"/>
<dbReference type="KEGG" id="mmr:Mmar10_2804"/>
<dbReference type="eggNOG" id="COG0056">
    <property type="taxonomic scope" value="Bacteria"/>
</dbReference>
<dbReference type="HOGENOM" id="CLU_010091_2_1_5"/>
<dbReference type="OrthoDB" id="9803053at2"/>
<dbReference type="Proteomes" id="UP000001964">
    <property type="component" value="Chromosome"/>
</dbReference>
<dbReference type="GO" id="GO:0005886">
    <property type="term" value="C:plasma membrane"/>
    <property type="evidence" value="ECO:0007669"/>
    <property type="project" value="UniProtKB-SubCell"/>
</dbReference>
<dbReference type="GO" id="GO:0045259">
    <property type="term" value="C:proton-transporting ATP synthase complex"/>
    <property type="evidence" value="ECO:0007669"/>
    <property type="project" value="UniProtKB-KW"/>
</dbReference>
<dbReference type="GO" id="GO:0043531">
    <property type="term" value="F:ADP binding"/>
    <property type="evidence" value="ECO:0007669"/>
    <property type="project" value="TreeGrafter"/>
</dbReference>
<dbReference type="GO" id="GO:0005524">
    <property type="term" value="F:ATP binding"/>
    <property type="evidence" value="ECO:0007669"/>
    <property type="project" value="UniProtKB-UniRule"/>
</dbReference>
<dbReference type="GO" id="GO:0046933">
    <property type="term" value="F:proton-transporting ATP synthase activity, rotational mechanism"/>
    <property type="evidence" value="ECO:0007669"/>
    <property type="project" value="UniProtKB-UniRule"/>
</dbReference>
<dbReference type="CDD" id="cd18113">
    <property type="entry name" value="ATP-synt_F1_alpha_C"/>
    <property type="match status" value="1"/>
</dbReference>
<dbReference type="CDD" id="cd18116">
    <property type="entry name" value="ATP-synt_F1_alpha_N"/>
    <property type="match status" value="1"/>
</dbReference>
<dbReference type="CDD" id="cd01132">
    <property type="entry name" value="F1-ATPase_alpha_CD"/>
    <property type="match status" value="1"/>
</dbReference>
<dbReference type="FunFam" id="1.20.150.20:FF:000001">
    <property type="entry name" value="ATP synthase subunit alpha"/>
    <property type="match status" value="1"/>
</dbReference>
<dbReference type="FunFam" id="2.40.30.20:FF:000001">
    <property type="entry name" value="ATP synthase subunit alpha"/>
    <property type="match status" value="1"/>
</dbReference>
<dbReference type="FunFam" id="3.40.50.300:FF:002432">
    <property type="entry name" value="ATP synthase subunit alpha, mitochondrial"/>
    <property type="match status" value="1"/>
</dbReference>
<dbReference type="Gene3D" id="2.40.30.20">
    <property type="match status" value="1"/>
</dbReference>
<dbReference type="Gene3D" id="1.20.150.20">
    <property type="entry name" value="ATP synthase alpha/beta chain, C-terminal domain"/>
    <property type="match status" value="1"/>
</dbReference>
<dbReference type="Gene3D" id="3.40.50.300">
    <property type="entry name" value="P-loop containing nucleotide triphosphate hydrolases"/>
    <property type="match status" value="1"/>
</dbReference>
<dbReference type="HAMAP" id="MF_01346">
    <property type="entry name" value="ATP_synth_alpha_bact"/>
    <property type="match status" value="1"/>
</dbReference>
<dbReference type="InterPro" id="IPR023366">
    <property type="entry name" value="ATP_synth_asu-like_sf"/>
</dbReference>
<dbReference type="InterPro" id="IPR000793">
    <property type="entry name" value="ATP_synth_asu_C"/>
</dbReference>
<dbReference type="InterPro" id="IPR038376">
    <property type="entry name" value="ATP_synth_asu_C_sf"/>
</dbReference>
<dbReference type="InterPro" id="IPR033732">
    <property type="entry name" value="ATP_synth_F1_a_nt-bd_dom"/>
</dbReference>
<dbReference type="InterPro" id="IPR005294">
    <property type="entry name" value="ATP_synth_F1_asu"/>
</dbReference>
<dbReference type="InterPro" id="IPR020003">
    <property type="entry name" value="ATPase_a/bsu_AS"/>
</dbReference>
<dbReference type="InterPro" id="IPR004100">
    <property type="entry name" value="ATPase_F1/V1/A1_a/bsu_N"/>
</dbReference>
<dbReference type="InterPro" id="IPR036121">
    <property type="entry name" value="ATPase_F1/V1/A1_a/bsu_N_sf"/>
</dbReference>
<dbReference type="InterPro" id="IPR000194">
    <property type="entry name" value="ATPase_F1/V1/A1_a/bsu_nucl-bd"/>
</dbReference>
<dbReference type="InterPro" id="IPR027417">
    <property type="entry name" value="P-loop_NTPase"/>
</dbReference>
<dbReference type="NCBIfam" id="TIGR00962">
    <property type="entry name" value="atpA"/>
    <property type="match status" value="1"/>
</dbReference>
<dbReference type="NCBIfam" id="NF009884">
    <property type="entry name" value="PRK13343.1"/>
    <property type="match status" value="1"/>
</dbReference>
<dbReference type="PANTHER" id="PTHR48082">
    <property type="entry name" value="ATP SYNTHASE SUBUNIT ALPHA, MITOCHONDRIAL"/>
    <property type="match status" value="1"/>
</dbReference>
<dbReference type="PANTHER" id="PTHR48082:SF2">
    <property type="entry name" value="ATP SYNTHASE SUBUNIT ALPHA, MITOCHONDRIAL"/>
    <property type="match status" value="1"/>
</dbReference>
<dbReference type="Pfam" id="PF00006">
    <property type="entry name" value="ATP-synt_ab"/>
    <property type="match status" value="1"/>
</dbReference>
<dbReference type="Pfam" id="PF00306">
    <property type="entry name" value="ATP-synt_ab_C"/>
    <property type="match status" value="1"/>
</dbReference>
<dbReference type="Pfam" id="PF02874">
    <property type="entry name" value="ATP-synt_ab_N"/>
    <property type="match status" value="1"/>
</dbReference>
<dbReference type="PIRSF" id="PIRSF039088">
    <property type="entry name" value="F_ATPase_subunit_alpha"/>
    <property type="match status" value="1"/>
</dbReference>
<dbReference type="SUPFAM" id="SSF47917">
    <property type="entry name" value="C-terminal domain of alpha and beta subunits of F1 ATP synthase"/>
    <property type="match status" value="1"/>
</dbReference>
<dbReference type="SUPFAM" id="SSF50615">
    <property type="entry name" value="N-terminal domain of alpha and beta subunits of F1 ATP synthase"/>
    <property type="match status" value="1"/>
</dbReference>
<dbReference type="SUPFAM" id="SSF52540">
    <property type="entry name" value="P-loop containing nucleoside triphosphate hydrolases"/>
    <property type="match status" value="1"/>
</dbReference>
<dbReference type="PROSITE" id="PS00152">
    <property type="entry name" value="ATPASE_ALPHA_BETA"/>
    <property type="match status" value="1"/>
</dbReference>
<organism>
    <name type="scientific">Maricaulis maris (strain MCS10)</name>
    <name type="common">Caulobacter maris</name>
    <dbReference type="NCBI Taxonomy" id="394221"/>
    <lineage>
        <taxon>Bacteria</taxon>
        <taxon>Pseudomonadati</taxon>
        <taxon>Pseudomonadota</taxon>
        <taxon>Alphaproteobacteria</taxon>
        <taxon>Maricaulales</taxon>
        <taxon>Maricaulaceae</taxon>
        <taxon>Maricaulis</taxon>
    </lineage>
</organism>
<evidence type="ECO:0000255" key="1">
    <source>
        <dbReference type="HAMAP-Rule" id="MF_01346"/>
    </source>
</evidence>
<keyword id="KW-0066">ATP synthesis</keyword>
<keyword id="KW-0067">ATP-binding</keyword>
<keyword id="KW-0997">Cell inner membrane</keyword>
<keyword id="KW-1003">Cell membrane</keyword>
<keyword id="KW-0139">CF(1)</keyword>
<keyword id="KW-0375">Hydrogen ion transport</keyword>
<keyword id="KW-0406">Ion transport</keyword>
<keyword id="KW-0472">Membrane</keyword>
<keyword id="KW-0547">Nucleotide-binding</keyword>
<keyword id="KW-1185">Reference proteome</keyword>
<keyword id="KW-1278">Translocase</keyword>
<keyword id="KW-0813">Transport</keyword>
<gene>
    <name evidence="1" type="primary">atpA</name>
    <name type="ordered locus">Mmar10_2804</name>
</gene>
<comment type="function">
    <text evidence="1">Produces ATP from ADP in the presence of a proton gradient across the membrane. The alpha chain is a regulatory subunit.</text>
</comment>
<comment type="catalytic activity">
    <reaction evidence="1">
        <text>ATP + H2O + 4 H(+)(in) = ADP + phosphate + 5 H(+)(out)</text>
        <dbReference type="Rhea" id="RHEA:57720"/>
        <dbReference type="ChEBI" id="CHEBI:15377"/>
        <dbReference type="ChEBI" id="CHEBI:15378"/>
        <dbReference type="ChEBI" id="CHEBI:30616"/>
        <dbReference type="ChEBI" id="CHEBI:43474"/>
        <dbReference type="ChEBI" id="CHEBI:456216"/>
        <dbReference type="EC" id="7.1.2.2"/>
    </reaction>
</comment>
<comment type="subunit">
    <text evidence="1">F-type ATPases have 2 components, CF(1) - the catalytic core - and CF(0) - the membrane proton channel. CF(1) has five subunits: alpha(3), beta(3), gamma(1), delta(1), epsilon(1). CF(0) has three main subunits: a(1), b(2) and c(9-12). The alpha and beta chains form an alternating ring which encloses part of the gamma chain. CF(1) is attached to CF(0) by a central stalk formed by the gamma and epsilon chains, while a peripheral stalk is formed by the delta and b chains.</text>
</comment>
<comment type="subcellular location">
    <subcellularLocation>
        <location evidence="1">Cell inner membrane</location>
        <topology evidence="1">Peripheral membrane protein</topology>
    </subcellularLocation>
</comment>
<comment type="similarity">
    <text evidence="1">Belongs to the ATPase alpha/beta chains family.</text>
</comment>
<reference key="1">
    <citation type="submission" date="2006-08" db="EMBL/GenBank/DDBJ databases">
        <title>Complete sequence of Maricaulis maris MCS10.</title>
        <authorList>
            <consortium name="US DOE Joint Genome Institute"/>
            <person name="Copeland A."/>
            <person name="Lucas S."/>
            <person name="Lapidus A."/>
            <person name="Barry K."/>
            <person name="Detter J.C."/>
            <person name="Glavina del Rio T."/>
            <person name="Hammon N."/>
            <person name="Israni S."/>
            <person name="Dalin E."/>
            <person name="Tice H."/>
            <person name="Pitluck S."/>
            <person name="Saunders E."/>
            <person name="Brettin T."/>
            <person name="Bruce D."/>
            <person name="Han C."/>
            <person name="Tapia R."/>
            <person name="Gilna P."/>
            <person name="Schmutz J."/>
            <person name="Larimer F."/>
            <person name="Land M."/>
            <person name="Hauser L."/>
            <person name="Kyrpides N."/>
            <person name="Mikhailova N."/>
            <person name="Viollier P."/>
            <person name="Stephens C."/>
            <person name="Richardson P."/>
        </authorList>
    </citation>
    <scope>NUCLEOTIDE SEQUENCE [LARGE SCALE GENOMIC DNA]</scope>
    <source>
        <strain>MCS10</strain>
    </source>
</reference>